<reference evidence="14" key="1">
    <citation type="journal article" date="2002" name="Nature">
        <title>Genome sequence of the human malaria parasite Plasmodium falciparum.</title>
        <authorList>
            <person name="Gardner M.J."/>
            <person name="Hall N."/>
            <person name="Fung E."/>
            <person name="White O."/>
            <person name="Berriman M."/>
            <person name="Hyman R.W."/>
            <person name="Carlton J.M."/>
            <person name="Pain A."/>
            <person name="Nelson K.E."/>
            <person name="Bowman S."/>
            <person name="Paulsen I.T."/>
            <person name="James K.D."/>
            <person name="Eisen J.A."/>
            <person name="Rutherford K.M."/>
            <person name="Salzberg S.L."/>
            <person name="Craig A."/>
            <person name="Kyes S."/>
            <person name="Chan M.-S."/>
            <person name="Nene V."/>
            <person name="Shallom S.J."/>
            <person name="Suh B."/>
            <person name="Peterson J."/>
            <person name="Angiuoli S."/>
            <person name="Pertea M."/>
            <person name="Allen J."/>
            <person name="Selengut J."/>
            <person name="Haft D."/>
            <person name="Mather M.W."/>
            <person name="Vaidya A.B."/>
            <person name="Martin D.M.A."/>
            <person name="Fairlamb A.H."/>
            <person name="Fraunholz M.J."/>
            <person name="Roos D.S."/>
            <person name="Ralph S.A."/>
            <person name="McFadden G.I."/>
            <person name="Cummings L.M."/>
            <person name="Subramanian G.M."/>
            <person name="Mungall C."/>
            <person name="Venter J.C."/>
            <person name="Carucci D.J."/>
            <person name="Hoffman S.L."/>
            <person name="Newbold C."/>
            <person name="Davis R.W."/>
            <person name="Fraser C.M."/>
            <person name="Barrell B.G."/>
        </authorList>
    </citation>
    <scope>NUCLEOTIDE SEQUENCE [LARGE SCALE GENOMIC DNA]</scope>
    <source>
        <strain evidence="14">3D7</strain>
    </source>
</reference>
<reference evidence="12" key="2">
    <citation type="journal article" date="1997" name="Mol. Biochem. Parasitol.">
        <title>Identification of an endoplasmic reticulum-resident calcium-binding protein with multiple EF-hand motifs in asexual stages of Plasmodium falciparum.</title>
        <authorList>
            <person name="La Greca N."/>
            <person name="Hibbs A.R."/>
            <person name="Riffkin C."/>
            <person name="Foley M."/>
            <person name="Tilley L."/>
        </authorList>
    </citation>
    <scope>PROTEIN SEQUENCE OF 238-249</scope>
    <scope>FUNCTION</scope>
    <scope>SUBCELLULAR LOCATION</scope>
    <scope>DEVELOPMENTAL STAGE</scope>
    <source>
        <strain evidence="10">D10</strain>
        <strain evidence="10">FCR3</strain>
    </source>
</reference>
<reference evidence="12" key="3">
    <citation type="journal article" date="1997" name="Mol. Biochem. Parasitol.">
        <title>Plasmodium falciparum Pfs40, renamed Pf39, is localized to an intracellular membrane-bound compartment and is not sexual stage-specific.</title>
        <authorList>
            <person name="Templeton T.J."/>
            <person name="Fujioka H."/>
            <person name="Aikawa M."/>
            <person name="Parker K.C."/>
            <person name="Kaslow D.C."/>
        </authorList>
    </citation>
    <scope>SUBCELLULAR LOCATION</scope>
    <scope>DEVELOPMENTAL STAGE</scope>
</reference>
<reference evidence="12" key="4">
    <citation type="journal article" date="2012" name="J. Proteome Res.">
        <title>Plasmodium falciparum endoplasmic reticulum-resident calcium binding protein is a possible target of synthetic antimalarial endoperoxides, N-89 and N-251.</title>
        <authorList>
            <person name="Morita M."/>
            <person name="Sanai H."/>
            <person name="Hiramoto A."/>
            <person name="Sato A."/>
            <person name="Hiraoka O."/>
            <person name="Sakura T."/>
            <person name="Kaneko O."/>
            <person name="Masuyama A."/>
            <person name="Nojima M."/>
            <person name="Wataya Y."/>
            <person name="Kim H.S."/>
        </authorList>
    </citation>
    <scope>IDENTIFICATION BY MASS SPECTROMETRY</scope>
    <scope>SUBCELLULAR LOCATION</scope>
    <source>
        <strain evidence="8">FCR3</strain>
    </source>
</reference>
<reference evidence="12" key="5">
    <citation type="journal article" date="2020" name="MBio">
        <title>An Endoplasmic Reticulum CREC Family Protein Regulates the Egress Proteolytic Cascade in Malaria Parasites.</title>
        <authorList>
            <person name="Fierro M.A."/>
            <person name="Asady B."/>
            <person name="Brooks C.F."/>
            <person name="Cobb D.W."/>
            <person name="Villegas A."/>
            <person name="Moreno S.N.J."/>
            <person name="Muralidharan V."/>
        </authorList>
    </citation>
    <scope>FUNCTION</scope>
    <scope>SUBCELLULAR LOCATION</scope>
    <scope>DISRUPTION PHENOTYPE</scope>
</reference>
<feature type="signal peptide" evidence="1">
    <location>
        <begin position="1"/>
        <end position="26"/>
    </location>
</feature>
<feature type="chain" id="PRO_5030176220" description="Endoplasmic reticulum-resident calcium binding protein" evidence="1">
    <location>
        <begin position="27"/>
        <end position="343"/>
    </location>
</feature>
<feature type="domain" description="EF-hand 1" evidence="2">
    <location>
        <begin position="59"/>
        <end position="94"/>
    </location>
</feature>
<feature type="domain" description="EF-hand 2" evidence="2">
    <location>
        <begin position="95"/>
        <end position="130"/>
    </location>
</feature>
<feature type="domain" description="EF-hand 3" evidence="2">
    <location>
        <begin position="135"/>
        <end position="170"/>
    </location>
</feature>
<feature type="domain" description="EF-hand 4" evidence="2">
    <location>
        <begin position="172"/>
        <end position="207"/>
    </location>
</feature>
<feature type="domain" description="EF-hand 5" evidence="2">
    <location>
        <begin position="210"/>
        <end position="245"/>
    </location>
</feature>
<feature type="region of interest" description="Disordered" evidence="3">
    <location>
        <begin position="313"/>
        <end position="343"/>
    </location>
</feature>
<feature type="compositionally biased region" description="Acidic residues" evidence="3">
    <location>
        <begin position="313"/>
        <end position="331"/>
    </location>
</feature>
<feature type="binding site" evidence="2">
    <location>
        <position position="72"/>
    </location>
    <ligand>
        <name>Ca(2+)</name>
        <dbReference type="ChEBI" id="CHEBI:29108"/>
        <label>1</label>
    </ligand>
</feature>
<feature type="binding site" evidence="2">
    <location>
        <position position="74"/>
    </location>
    <ligand>
        <name>Ca(2+)</name>
        <dbReference type="ChEBI" id="CHEBI:29108"/>
        <label>1</label>
    </ligand>
</feature>
<feature type="binding site" evidence="2">
    <location>
        <position position="76"/>
    </location>
    <ligand>
        <name>Ca(2+)</name>
        <dbReference type="ChEBI" id="CHEBI:29108"/>
        <label>1</label>
    </ligand>
</feature>
<feature type="binding site" evidence="2">
    <location>
        <position position="78"/>
    </location>
    <ligand>
        <name>Ca(2+)</name>
        <dbReference type="ChEBI" id="CHEBI:29108"/>
        <label>1</label>
    </ligand>
</feature>
<feature type="binding site" evidence="2">
    <location>
        <position position="83"/>
    </location>
    <ligand>
        <name>Ca(2+)</name>
        <dbReference type="ChEBI" id="CHEBI:29108"/>
        <label>1</label>
    </ligand>
</feature>
<feature type="binding site" evidence="2">
    <location>
        <position position="108"/>
    </location>
    <ligand>
        <name>Ca(2+)</name>
        <dbReference type="ChEBI" id="CHEBI:29108"/>
        <label>2</label>
    </ligand>
</feature>
<feature type="binding site" evidence="2">
    <location>
        <position position="110"/>
    </location>
    <ligand>
        <name>Ca(2+)</name>
        <dbReference type="ChEBI" id="CHEBI:29108"/>
        <label>2</label>
    </ligand>
</feature>
<feature type="binding site" evidence="2">
    <location>
        <position position="112"/>
    </location>
    <ligand>
        <name>Ca(2+)</name>
        <dbReference type="ChEBI" id="CHEBI:29108"/>
        <label>2</label>
    </ligand>
</feature>
<feature type="binding site" evidence="2">
    <location>
        <position position="119"/>
    </location>
    <ligand>
        <name>Ca(2+)</name>
        <dbReference type="ChEBI" id="CHEBI:29108"/>
        <label>2</label>
    </ligand>
</feature>
<feature type="binding site" evidence="2">
    <location>
        <position position="148"/>
    </location>
    <ligand>
        <name>Ca(2+)</name>
        <dbReference type="ChEBI" id="CHEBI:29108"/>
        <label>3</label>
    </ligand>
</feature>
<feature type="binding site" evidence="2">
    <location>
        <position position="150"/>
    </location>
    <ligand>
        <name>Ca(2+)</name>
        <dbReference type="ChEBI" id="CHEBI:29108"/>
        <label>3</label>
    </ligand>
</feature>
<feature type="binding site" evidence="2">
    <location>
        <position position="152"/>
    </location>
    <ligand>
        <name>Ca(2+)</name>
        <dbReference type="ChEBI" id="CHEBI:29108"/>
        <label>3</label>
    </ligand>
</feature>
<feature type="binding site" evidence="2">
    <location>
        <position position="154"/>
    </location>
    <ligand>
        <name>Ca(2+)</name>
        <dbReference type="ChEBI" id="CHEBI:29108"/>
        <label>3</label>
    </ligand>
</feature>
<feature type="binding site" evidence="2">
    <location>
        <position position="159"/>
    </location>
    <ligand>
        <name>Ca(2+)</name>
        <dbReference type="ChEBI" id="CHEBI:29108"/>
        <label>3</label>
    </ligand>
</feature>
<feature type="binding site" evidence="2">
    <location>
        <position position="185"/>
    </location>
    <ligand>
        <name>Ca(2+)</name>
        <dbReference type="ChEBI" id="CHEBI:29108"/>
        <label>4</label>
    </ligand>
</feature>
<feature type="binding site" evidence="2">
    <location>
        <position position="187"/>
    </location>
    <ligand>
        <name>Ca(2+)</name>
        <dbReference type="ChEBI" id="CHEBI:29108"/>
        <label>4</label>
    </ligand>
</feature>
<feature type="binding site" evidence="2">
    <location>
        <position position="189"/>
    </location>
    <ligand>
        <name>Ca(2+)</name>
        <dbReference type="ChEBI" id="CHEBI:29108"/>
        <label>4</label>
    </ligand>
</feature>
<feature type="binding site" evidence="2">
    <location>
        <position position="191"/>
    </location>
    <ligand>
        <name>Ca(2+)</name>
        <dbReference type="ChEBI" id="CHEBI:29108"/>
        <label>4</label>
    </ligand>
</feature>
<feature type="binding site" evidence="2">
    <location>
        <position position="196"/>
    </location>
    <ligand>
        <name>Ca(2+)</name>
        <dbReference type="ChEBI" id="CHEBI:29108"/>
        <label>4</label>
    </ligand>
</feature>
<feature type="binding site" evidence="2">
    <location>
        <position position="223"/>
    </location>
    <ligand>
        <name>Ca(2+)</name>
        <dbReference type="ChEBI" id="CHEBI:29108"/>
        <label>5</label>
    </ligand>
</feature>
<feature type="binding site" evidence="2">
    <location>
        <position position="225"/>
    </location>
    <ligand>
        <name>Ca(2+)</name>
        <dbReference type="ChEBI" id="CHEBI:29108"/>
        <label>5</label>
    </ligand>
</feature>
<feature type="binding site" evidence="2">
    <location>
        <position position="227"/>
    </location>
    <ligand>
        <name>Ca(2+)</name>
        <dbReference type="ChEBI" id="CHEBI:29108"/>
        <label>5</label>
    </ligand>
</feature>
<feature type="binding site" evidence="2">
    <location>
        <position position="234"/>
    </location>
    <ligand>
        <name>Ca(2+)</name>
        <dbReference type="ChEBI" id="CHEBI:29108"/>
        <label>5</label>
    </ligand>
</feature>
<protein>
    <recommendedName>
        <fullName evidence="8 9 10">Endoplasmic reticulum-resident calcium binding protein</fullName>
        <shortName evidence="8 9 10">PfERC</shortName>
    </recommendedName>
    <alternativeName>
        <fullName evidence="11">Pf39</fullName>
    </alternativeName>
    <alternativeName>
        <fullName evidence="10 11">Pfs40</fullName>
    </alternativeName>
</protein>
<organism evidence="14">
    <name type="scientific">Plasmodium falciparum (isolate 3D7)</name>
    <dbReference type="NCBI Taxonomy" id="36329"/>
    <lineage>
        <taxon>Eukaryota</taxon>
        <taxon>Sar</taxon>
        <taxon>Alveolata</taxon>
        <taxon>Apicomplexa</taxon>
        <taxon>Aconoidasida</taxon>
        <taxon>Haemosporida</taxon>
        <taxon>Plasmodiidae</taxon>
        <taxon>Plasmodium</taxon>
        <taxon>Plasmodium (Laverania)</taxon>
    </lineage>
</organism>
<gene>
    <name evidence="12" type="primary">ERC</name>
    <name evidence="13" type="ORF">PF3D7_1108600</name>
</gene>
<proteinExistence type="evidence at protein level"/>
<name>PFERC_PLAF7</name>
<dbReference type="EMBL" id="LN999945">
    <property type="protein sequence ID" value="CZT98752.1"/>
    <property type="molecule type" value="Genomic_DNA"/>
</dbReference>
<dbReference type="RefSeq" id="XP_001347773.1">
    <property type="nucleotide sequence ID" value="XM_001347737.1"/>
</dbReference>
<dbReference type="FunCoup" id="Q8IIR7">
    <property type="interactions" value="6"/>
</dbReference>
<dbReference type="IntAct" id="Q8IIR7">
    <property type="interactions" value="6"/>
</dbReference>
<dbReference type="STRING" id="36329.Q8IIR7"/>
<dbReference type="PaxDb" id="5833-PF11_0098"/>
<dbReference type="EnsemblProtists" id="CZT98752">
    <property type="protein sequence ID" value="CZT98752"/>
    <property type="gene ID" value="PF3D7_1108600"/>
</dbReference>
<dbReference type="GeneID" id="810649"/>
<dbReference type="KEGG" id="pfa:PF3D7_1108600"/>
<dbReference type="VEuPathDB" id="PlasmoDB:PF3D7_1108600"/>
<dbReference type="HOGENOM" id="CLU_810069_0_0_1"/>
<dbReference type="InParanoid" id="Q8IIR7"/>
<dbReference type="OMA" id="PLSNKEH"/>
<dbReference type="OrthoDB" id="230974at2759"/>
<dbReference type="PhylomeDB" id="Q8IIR7"/>
<dbReference type="Proteomes" id="UP000001450">
    <property type="component" value="Chromosome 11"/>
</dbReference>
<dbReference type="GO" id="GO:0005783">
    <property type="term" value="C:endoplasmic reticulum"/>
    <property type="evidence" value="ECO:0000314"/>
    <property type="project" value="GeneDB"/>
</dbReference>
<dbReference type="GO" id="GO:0005509">
    <property type="term" value="F:calcium ion binding"/>
    <property type="evidence" value="ECO:0000250"/>
    <property type="project" value="GeneDB"/>
</dbReference>
<dbReference type="GO" id="GO:0006886">
    <property type="term" value="P:intracellular protein transport"/>
    <property type="evidence" value="ECO:0000304"/>
    <property type="project" value="GeneDB"/>
</dbReference>
<dbReference type="FunFam" id="1.10.238.10:FF:000282">
    <property type="entry name" value="Endoplasmic reticulum-resident calcium binding protein"/>
    <property type="match status" value="1"/>
</dbReference>
<dbReference type="Gene3D" id="1.10.238.10">
    <property type="entry name" value="EF-hand"/>
    <property type="match status" value="2"/>
</dbReference>
<dbReference type="InterPro" id="IPR011992">
    <property type="entry name" value="EF-hand-dom_pair"/>
</dbReference>
<dbReference type="InterPro" id="IPR018247">
    <property type="entry name" value="EF_Hand_1_Ca_BS"/>
</dbReference>
<dbReference type="InterPro" id="IPR002048">
    <property type="entry name" value="EF_hand_dom"/>
</dbReference>
<dbReference type="PANTHER" id="PTHR10827:SF85">
    <property type="entry name" value="CALCIUM-BINDING PROTEIN"/>
    <property type="match status" value="1"/>
</dbReference>
<dbReference type="PANTHER" id="PTHR10827">
    <property type="entry name" value="RETICULOCALBIN"/>
    <property type="match status" value="1"/>
</dbReference>
<dbReference type="Pfam" id="PF13202">
    <property type="entry name" value="EF-hand_5"/>
    <property type="match status" value="1"/>
</dbReference>
<dbReference type="Pfam" id="PF13499">
    <property type="entry name" value="EF-hand_7"/>
    <property type="match status" value="2"/>
</dbReference>
<dbReference type="SMART" id="SM00054">
    <property type="entry name" value="EFh"/>
    <property type="match status" value="5"/>
</dbReference>
<dbReference type="SUPFAM" id="SSF47473">
    <property type="entry name" value="EF-hand"/>
    <property type="match status" value="2"/>
</dbReference>
<dbReference type="PROSITE" id="PS00018">
    <property type="entry name" value="EF_HAND_1"/>
    <property type="match status" value="5"/>
</dbReference>
<dbReference type="PROSITE" id="PS50222">
    <property type="entry name" value="EF_HAND_2"/>
    <property type="match status" value="5"/>
</dbReference>
<comment type="function">
    <text evidence="5 6">Calcium-binding protein (PubMed:9364972). Required for schizont to ring transition (PubMed:32098818). Required for the breakdown of the parasitophorous vacuole membrane during egress (PubMed:32098818). Required for the proteolytic maturation of apical membrane antigen 1 (AMA-1) during egress (PubMed:32098818). Required for the proteolytic maturation of subtilisin-like protease 1 (SUB1) during egress (PubMed:32098818). Required for the proteolytic maturation of plasmepsin X (PMX) during egress (PubMed:32098818).</text>
</comment>
<comment type="subcellular location">
    <subcellularLocation>
        <location evidence="4 5 6 7">Endoplasmic reticulum</location>
    </subcellularLocation>
</comment>
<comment type="developmental stage">
    <text evidence="6 7">Expressed during all stages of the intra-erythrocytic cycle (at protein level) (PubMed:9364972, PubMed:9497061). Reaches maximal levels at the schizont stage (at protein level) (PubMed:9364972). Expressed in early stage and mature gametocytes (at protein level) (PubMed:9497061).</text>
</comment>
<comment type="disruption phenotype">
    <text evidence="5">Conditional knockdown results in inhibition of the asexual growth of parasites (PubMed:32098818). Defects in the conversion of schizonts into rings (PubMed:32098818). Defects in parasite egress from host cells (PubMed:32098818). Defects in the breakdown of the parasitophorous vacuole membrane (PubMed:32098818). Reduction in the proteolytic processing of apical membrane antigen 1 (AMA-1) during egress (PubMed:32098818). Reduction in the proteolytic processing of subtilisin-like protease 1 (SUB1) from the p54 form to the p47 form (PubMed:32098818). Reduction in the proteolytic processing of plasmepsin X (PMX) from p67 to the p45 form (PubMed:32098818). No significant effects on calcium storage in the endoplasmic reticulum (PubMed:32098818). No significant effects on the function of the secretory pathway (PubMed:32098818). No significant effects on the morphology of micronemes and rhoptries (PubMed:32098818).</text>
</comment>
<comment type="miscellaneous">
    <text evidence="4">Possible target protein of synthetic antimalarial endoperoxides N-89 and N-251, which have high antimalarial potencies both in vivo and in vitro.</text>
</comment>
<comment type="similarity">
    <text evidence="12">Belongs to the CREC family.</text>
</comment>
<keyword id="KW-0106">Calcium</keyword>
<keyword id="KW-0903">Direct protein sequencing</keyword>
<keyword id="KW-0256">Endoplasmic reticulum</keyword>
<keyword id="KW-1185">Reference proteome</keyword>
<keyword id="KW-0732">Signal</keyword>
<sequence>MMKINLYKLLCFICVIFLLHKNVVRSGDNMKYNDMKGLDDLSKLNDDQVKDILGLKIDGAKERIEKLFHLIDKNNDKEITEEELNTWSSFLKNEIFLKQVQAEMGQIDSDKDGFISLNELNDAFAQNLDAKEVEKHSEGLLKRFQIVDKDKDGKLSINEVGLLIDPMKDEELKELEINEILEHHDVNKDGKISLDEFKQTRSDESSGVKKDDEMALDDFNFFDANKDGFIDKEEIIKVYFDPAHESGAINVNEIKENIFEGKKITYDLWNEKALKIAVTSLTDYGDVIRYPEDFKLDIGKNVILPTARSRAFEDDDMDADNTEDDKDEADDASQQKSPAIDEL</sequence>
<evidence type="ECO:0000255" key="1"/>
<evidence type="ECO:0000255" key="2">
    <source>
        <dbReference type="PROSITE-ProRule" id="PRU00448"/>
    </source>
</evidence>
<evidence type="ECO:0000256" key="3">
    <source>
        <dbReference type="SAM" id="MobiDB-lite"/>
    </source>
</evidence>
<evidence type="ECO:0000269" key="4">
    <source>
    </source>
</evidence>
<evidence type="ECO:0000269" key="5">
    <source>
    </source>
</evidence>
<evidence type="ECO:0000269" key="6">
    <source>
    </source>
</evidence>
<evidence type="ECO:0000269" key="7">
    <source>
    </source>
</evidence>
<evidence type="ECO:0000303" key="8">
    <source>
    </source>
</evidence>
<evidence type="ECO:0000303" key="9">
    <source>
    </source>
</evidence>
<evidence type="ECO:0000303" key="10">
    <source>
    </source>
</evidence>
<evidence type="ECO:0000303" key="11">
    <source>
    </source>
</evidence>
<evidence type="ECO:0000305" key="12"/>
<evidence type="ECO:0000312" key="13">
    <source>
        <dbReference type="EMBL" id="CZT98752.1"/>
    </source>
</evidence>
<evidence type="ECO:0000312" key="14">
    <source>
        <dbReference type="Proteomes" id="UP000001450"/>
    </source>
</evidence>
<accession>Q8IIR7</accession>